<evidence type="ECO:0000250" key="1"/>
<evidence type="ECO:0000255" key="2">
    <source>
        <dbReference type="PROSITE-ProRule" id="PRU00241"/>
    </source>
</evidence>
<evidence type="ECO:0000305" key="3"/>
<gene>
    <name type="primary">rubR1</name>
    <name type="ordered locus">CPE0777</name>
</gene>
<protein>
    <recommendedName>
        <fullName>Rubredoxin-1</fullName>
        <shortName>Rd 1</shortName>
    </recommendedName>
</protein>
<accession>Q8XMB2</accession>
<feature type="chain" id="PRO_0000135031" description="Rubredoxin-1">
    <location>
        <begin position="1"/>
        <end position="53"/>
    </location>
</feature>
<feature type="domain" description="Rubredoxin-like" evidence="2">
    <location>
        <begin position="1"/>
        <end position="53"/>
    </location>
</feature>
<feature type="binding site" evidence="2">
    <location>
        <position position="6"/>
    </location>
    <ligand>
        <name>Fe cation</name>
        <dbReference type="ChEBI" id="CHEBI:24875"/>
    </ligand>
</feature>
<feature type="binding site" evidence="2">
    <location>
        <position position="9"/>
    </location>
    <ligand>
        <name>Fe cation</name>
        <dbReference type="ChEBI" id="CHEBI:24875"/>
    </ligand>
</feature>
<feature type="binding site" evidence="2">
    <location>
        <position position="39"/>
    </location>
    <ligand>
        <name>Fe cation</name>
        <dbReference type="ChEBI" id="CHEBI:24875"/>
    </ligand>
</feature>
<feature type="binding site" evidence="2">
    <location>
        <position position="42"/>
    </location>
    <ligand>
        <name>Fe cation</name>
        <dbReference type="ChEBI" id="CHEBI:24875"/>
    </ligand>
</feature>
<proteinExistence type="inferred from homology"/>
<dbReference type="EMBL" id="BA000016">
    <property type="protein sequence ID" value="BAB80483.1"/>
    <property type="molecule type" value="Genomic_DNA"/>
</dbReference>
<dbReference type="SMR" id="Q8XMB2"/>
<dbReference type="STRING" id="195102.gene:10490039"/>
<dbReference type="KEGG" id="cpe:CPE0777"/>
<dbReference type="HOGENOM" id="CLU_128747_3_3_9"/>
<dbReference type="Proteomes" id="UP000000818">
    <property type="component" value="Chromosome"/>
</dbReference>
<dbReference type="GO" id="GO:0009055">
    <property type="term" value="F:electron transfer activity"/>
    <property type="evidence" value="ECO:0007669"/>
    <property type="project" value="InterPro"/>
</dbReference>
<dbReference type="GO" id="GO:0005506">
    <property type="term" value="F:iron ion binding"/>
    <property type="evidence" value="ECO:0007669"/>
    <property type="project" value="InterPro"/>
</dbReference>
<dbReference type="GO" id="GO:0043448">
    <property type="term" value="P:alkane catabolic process"/>
    <property type="evidence" value="ECO:0007669"/>
    <property type="project" value="TreeGrafter"/>
</dbReference>
<dbReference type="CDD" id="cd00730">
    <property type="entry name" value="rubredoxin"/>
    <property type="match status" value="1"/>
</dbReference>
<dbReference type="FunFam" id="2.20.28.10:FF:000001">
    <property type="entry name" value="Rubredoxin"/>
    <property type="match status" value="1"/>
</dbReference>
<dbReference type="Gene3D" id="2.20.28.10">
    <property type="match status" value="1"/>
</dbReference>
<dbReference type="InterPro" id="IPR024922">
    <property type="entry name" value="Rubredoxin"/>
</dbReference>
<dbReference type="InterPro" id="IPR024934">
    <property type="entry name" value="Rubredoxin-like_dom"/>
</dbReference>
<dbReference type="InterPro" id="IPR024935">
    <property type="entry name" value="Rubredoxin_dom"/>
</dbReference>
<dbReference type="InterPro" id="IPR050526">
    <property type="entry name" value="Rubredoxin_ET"/>
</dbReference>
<dbReference type="NCBIfam" id="NF045768">
    <property type="entry name" value="RubredRD"/>
    <property type="match status" value="1"/>
</dbReference>
<dbReference type="PANTHER" id="PTHR47627">
    <property type="entry name" value="RUBREDOXIN"/>
    <property type="match status" value="1"/>
</dbReference>
<dbReference type="PANTHER" id="PTHR47627:SF1">
    <property type="entry name" value="RUBREDOXIN-1-RELATED"/>
    <property type="match status" value="1"/>
</dbReference>
<dbReference type="Pfam" id="PF00301">
    <property type="entry name" value="Rubredoxin"/>
    <property type="match status" value="1"/>
</dbReference>
<dbReference type="PIRSF" id="PIRSF000071">
    <property type="entry name" value="Rubredoxin"/>
    <property type="match status" value="1"/>
</dbReference>
<dbReference type="PRINTS" id="PR00163">
    <property type="entry name" value="RUBREDOXIN"/>
</dbReference>
<dbReference type="SUPFAM" id="SSF57802">
    <property type="entry name" value="Rubredoxin-like"/>
    <property type="match status" value="1"/>
</dbReference>
<dbReference type="PROSITE" id="PS50903">
    <property type="entry name" value="RUBREDOXIN_LIKE"/>
    <property type="match status" value="1"/>
</dbReference>
<sequence length="53" mass="5922">MEKFVCDVCGYIYDPVVGDPDNGVAPGTKFKDIPDTWVCPLCKLDKTHFSKVE</sequence>
<comment type="function">
    <text>Rubredoxin is a small nonheme, iron protein lacking acid-labile sulfide. Its single Fe, chelated to 4 Cys, functions as an electron acceptor and may also stabilize the conformation of the molecule.</text>
</comment>
<comment type="cofactor">
    <cofactor evidence="1">
        <name>Fe(3+)</name>
        <dbReference type="ChEBI" id="CHEBI:29034"/>
    </cofactor>
    <text evidence="1">Binds 1 Fe(3+) ion per subunit.</text>
</comment>
<comment type="similarity">
    <text evidence="3">Belongs to the rubredoxin family.</text>
</comment>
<reference key="1">
    <citation type="journal article" date="2002" name="Proc. Natl. Acad. Sci. U.S.A.">
        <title>Complete genome sequence of Clostridium perfringens, an anaerobic flesh-eater.</title>
        <authorList>
            <person name="Shimizu T."/>
            <person name="Ohtani K."/>
            <person name="Hirakawa H."/>
            <person name="Ohshima K."/>
            <person name="Yamashita A."/>
            <person name="Shiba T."/>
            <person name="Ogasawara N."/>
            <person name="Hattori M."/>
            <person name="Kuhara S."/>
            <person name="Hayashi H."/>
        </authorList>
    </citation>
    <scope>NUCLEOTIDE SEQUENCE [LARGE SCALE GENOMIC DNA]</scope>
    <source>
        <strain>13 / Type A</strain>
    </source>
</reference>
<organism>
    <name type="scientific">Clostridium perfringens (strain 13 / Type A)</name>
    <dbReference type="NCBI Taxonomy" id="195102"/>
    <lineage>
        <taxon>Bacteria</taxon>
        <taxon>Bacillati</taxon>
        <taxon>Bacillota</taxon>
        <taxon>Clostridia</taxon>
        <taxon>Eubacteriales</taxon>
        <taxon>Clostridiaceae</taxon>
        <taxon>Clostridium</taxon>
    </lineage>
</organism>
<name>RUBR1_CLOPE</name>
<keyword id="KW-0249">Electron transport</keyword>
<keyword id="KW-0408">Iron</keyword>
<keyword id="KW-0479">Metal-binding</keyword>
<keyword id="KW-1185">Reference proteome</keyword>
<keyword id="KW-0813">Transport</keyword>